<evidence type="ECO:0000250" key="1"/>
<evidence type="ECO:0000256" key="2">
    <source>
        <dbReference type="SAM" id="MobiDB-lite"/>
    </source>
</evidence>
<evidence type="ECO:0000305" key="3"/>
<comment type="function">
    <text evidence="1">Plays a major role in assembly and budding of virion. Completely covers the ribonucleoprotein coil and keep it in condensed bullet-shaped form. Inhibits viral transcription and stimulates replication (By similarity).</text>
</comment>
<comment type="subunit">
    <text evidence="1">Homomultimer. Interacts with nucleoprotein and with the cytoplasmic domain of glycoprotein (By similarity).</text>
</comment>
<comment type="subcellular location">
    <subcellularLocation>
        <location>Virion membrane</location>
        <topology>Peripheral membrane protein</topology>
    </subcellularLocation>
    <subcellularLocation>
        <location evidence="1">Host endomembrane system</location>
        <topology evidence="1">Peripheral membrane protein</topology>
    </subcellularLocation>
</comment>
<comment type="miscellaneous">
    <text evidence="1">Most abundant protein in the virion.</text>
</comment>
<comment type="similarity">
    <text evidence="3">Belongs to the nucleorhabdovirus type-1 matrix protein family.</text>
</comment>
<dbReference type="EMBL" id="AB011257">
    <property type="protein sequence ID" value="BAA25157.1"/>
    <property type="molecule type" value="Genomic_RNA"/>
</dbReference>
<dbReference type="RefSeq" id="NP_620499.1">
    <property type="nucleotide sequence ID" value="NC_003746.1"/>
</dbReference>
<dbReference type="GeneID" id="944306"/>
<dbReference type="KEGG" id="vg:944306"/>
<dbReference type="Proteomes" id="UP000002325">
    <property type="component" value="Genome"/>
</dbReference>
<dbReference type="GO" id="GO:0033645">
    <property type="term" value="C:host cell endomembrane system"/>
    <property type="evidence" value="ECO:0007669"/>
    <property type="project" value="UniProtKB-SubCell"/>
</dbReference>
<dbReference type="GO" id="GO:0016020">
    <property type="term" value="C:membrane"/>
    <property type="evidence" value="ECO:0007669"/>
    <property type="project" value="UniProtKB-KW"/>
</dbReference>
<dbReference type="GO" id="GO:0019031">
    <property type="term" value="C:viral envelope"/>
    <property type="evidence" value="ECO:0007669"/>
    <property type="project" value="UniProtKB-KW"/>
</dbReference>
<dbReference type="GO" id="GO:0055036">
    <property type="term" value="C:virion membrane"/>
    <property type="evidence" value="ECO:0007669"/>
    <property type="project" value="UniProtKB-SubCell"/>
</dbReference>
<dbReference type="GO" id="GO:0039660">
    <property type="term" value="F:structural constituent of virion"/>
    <property type="evidence" value="ECO:0007669"/>
    <property type="project" value="UniProtKB-KW"/>
</dbReference>
<proteinExistence type="inferred from homology"/>
<organism>
    <name type="scientific">Rice yellow stunt virus</name>
    <name type="common">RYSV</name>
    <name type="synonym">Rice transitory yellowing virus</name>
    <dbReference type="NCBI Taxonomy" id="59380"/>
    <lineage>
        <taxon>Viruses</taxon>
        <taxon>Riboviria</taxon>
        <taxon>Orthornavirae</taxon>
        <taxon>Negarnaviricota</taxon>
        <taxon>Haploviricotina</taxon>
        <taxon>Monjiviricetes</taxon>
        <taxon>Mononegavirales</taxon>
        <taxon>Rhabdoviridae</taxon>
        <taxon>Betarhabdovirinae</taxon>
        <taxon>Alphanucleorhabdovirus</taxon>
        <taxon>Alphanucleorhabdovirus oryzae</taxon>
    </lineage>
</organism>
<accession>Q98664</accession>
<gene>
    <name type="primary">M</name>
</gene>
<keyword id="KW-0053">Apoptosis</keyword>
<keyword id="KW-1043">Host membrane</keyword>
<keyword id="KW-0472">Membrane</keyword>
<keyword id="KW-1185">Reference proteome</keyword>
<keyword id="KW-0261">Viral envelope protein</keyword>
<keyword id="KW-0468">Viral matrix protein</keyword>
<keyword id="KW-0946">Virion</keyword>
<feature type="chain" id="PRO_0000299246" description="Matrix protein">
    <location>
        <begin position="1"/>
        <end position="262"/>
    </location>
</feature>
<feature type="region of interest" description="Disordered" evidence="2">
    <location>
        <begin position="219"/>
        <end position="243"/>
    </location>
</feature>
<name>MATRX_RYSV</name>
<protein>
    <recommendedName>
        <fullName>Matrix protein</fullName>
    </recommendedName>
</protein>
<organismHost>
    <name type="scientific">Oryza sativa</name>
    <name type="common">Rice</name>
    <dbReference type="NCBI Taxonomy" id="4530"/>
</organismHost>
<reference key="1">
    <citation type="journal article" date="2003" name="J. Gen. Virol.">
        <title>Novel structure of the genome of Rice yellow stunt virus: identification of the gene 6-encoded virion protein.</title>
        <authorList>
            <person name="Huang Y."/>
            <person name="Zhao H."/>
            <person name="Luo Z."/>
            <person name="Chen X."/>
            <person name="Fang R.X."/>
        </authorList>
    </citation>
    <scope>NUCLEOTIDE SEQUENCE [GENOMIC RNA]</scope>
</reference>
<sequence>MANKKIRVTGAEAEQPSILKRISGALTLNPLDYHLDYSKLISLNFMVKISFHDASDYDLFVREGITPVELFEALASNWSTDSGEVHYVDGNTHDKDEIDTSVKLCELITIIKDLPFHKSEESTHFSILSTSLTLGFGDQILQKHDNSVIPIITERSLPQYMHAIIQYEYPRVSGGIAATICAGICIRSPPIGNCPPIMKPLHLELLCYHYGLKMSGDAPSPAEGKIGRIKRPTERKEDTPSMTKRLKGGVGATISRMLSWKE</sequence>